<organismHost>
    <name type="scientific">Acanthamoeba polyphaga</name>
    <name type="common">Amoeba</name>
    <dbReference type="NCBI Taxonomy" id="5757"/>
</organismHost>
<protein>
    <recommendedName>
        <fullName>Putative ankyrin repeat protein R848</fullName>
    </recommendedName>
</protein>
<reference key="1">
    <citation type="journal article" date="2004" name="Science">
        <title>The 1.2-megabase genome sequence of Mimivirus.</title>
        <authorList>
            <person name="Raoult D."/>
            <person name="Audic S."/>
            <person name="Robert C."/>
            <person name="Abergel C."/>
            <person name="Renesto P."/>
            <person name="Ogata H."/>
            <person name="La Scola B."/>
            <person name="Susan M."/>
            <person name="Claverie J.-M."/>
        </authorList>
    </citation>
    <scope>NUCLEOTIDE SEQUENCE [LARGE SCALE GENOMIC DNA]</scope>
    <source>
        <strain>Rowbotham-Bradford</strain>
    </source>
</reference>
<sequence length="262" mass="29656">MGANIRYSNDYALSLASKNGHIKVVKYLVSKDANVTHDNNYAVRYASENGHFEVVKYLVDQGADIRDCRDYAVRFASENGHLEVVKYLVDKGANIRALDDYAVCLASVNGYIEIVKYLVSQGANFRADNDYAVRFASENGYLEVVKFLVDQGADIRADDDYAIISASVYGHLEVIKFLMSQGADFRSKNNASIKLAIKYKHPEIIEYFLTQCTDVNTDIINIFYAYLTKLASKNKTAKLVEYMNIFCHIINKYDNCVKHLMP</sequence>
<accession>Q5UP11</accession>
<keyword id="KW-0040">ANK repeat</keyword>
<keyword id="KW-1185">Reference proteome</keyword>
<keyword id="KW-0677">Repeat</keyword>
<gene>
    <name type="ordered locus">MIMI_R848</name>
</gene>
<name>YR848_MIMIV</name>
<feature type="chain" id="PRO_0000067215" description="Putative ankyrin repeat protein R848">
    <location>
        <begin position="1"/>
        <end position="262"/>
    </location>
</feature>
<feature type="repeat" description="ANK 1">
    <location>
        <begin position="8"/>
        <end position="37"/>
    </location>
</feature>
<feature type="repeat" description="ANK 2">
    <location>
        <begin position="38"/>
        <end position="67"/>
    </location>
</feature>
<feature type="repeat" description="ANK 3">
    <location>
        <begin position="68"/>
        <end position="97"/>
    </location>
</feature>
<feature type="repeat" description="ANK 4">
    <location>
        <begin position="99"/>
        <end position="127"/>
    </location>
</feature>
<feature type="repeat" description="ANK 5">
    <location>
        <begin position="128"/>
        <end position="157"/>
    </location>
</feature>
<feature type="repeat" description="ANK 6">
    <location>
        <begin position="159"/>
        <end position="187"/>
    </location>
</feature>
<feature type="repeat" description="ANK 7">
    <location>
        <begin position="189"/>
        <end position="217"/>
    </location>
</feature>
<proteinExistence type="predicted"/>
<organism>
    <name type="scientific">Acanthamoeba polyphaga mimivirus</name>
    <name type="common">APMV</name>
    <dbReference type="NCBI Taxonomy" id="212035"/>
    <lineage>
        <taxon>Viruses</taxon>
        <taxon>Varidnaviria</taxon>
        <taxon>Bamfordvirae</taxon>
        <taxon>Nucleocytoviricota</taxon>
        <taxon>Megaviricetes</taxon>
        <taxon>Imitervirales</taxon>
        <taxon>Mimiviridae</taxon>
        <taxon>Megamimivirinae</taxon>
        <taxon>Mimivirus</taxon>
        <taxon>Mimivirus bradfordmassiliense</taxon>
    </lineage>
</organism>
<dbReference type="EMBL" id="AY653733">
    <property type="protein sequence ID" value="AAV51106.1"/>
    <property type="molecule type" value="Genomic_DNA"/>
</dbReference>
<dbReference type="SMR" id="Q5UP11"/>
<dbReference type="Proteomes" id="UP000001134">
    <property type="component" value="Genome"/>
</dbReference>
<dbReference type="Gene3D" id="1.25.40.20">
    <property type="entry name" value="Ankyrin repeat-containing domain"/>
    <property type="match status" value="2"/>
</dbReference>
<dbReference type="InterPro" id="IPR002110">
    <property type="entry name" value="Ankyrin_rpt"/>
</dbReference>
<dbReference type="InterPro" id="IPR036770">
    <property type="entry name" value="Ankyrin_rpt-contain_sf"/>
</dbReference>
<dbReference type="PANTHER" id="PTHR24188">
    <property type="entry name" value="ANKYRIN REPEAT PROTEIN"/>
    <property type="match status" value="1"/>
</dbReference>
<dbReference type="PANTHER" id="PTHR24188:SF29">
    <property type="entry name" value="GH09064P"/>
    <property type="match status" value="1"/>
</dbReference>
<dbReference type="Pfam" id="PF00023">
    <property type="entry name" value="Ank"/>
    <property type="match status" value="1"/>
</dbReference>
<dbReference type="Pfam" id="PF12796">
    <property type="entry name" value="Ank_2"/>
    <property type="match status" value="2"/>
</dbReference>
<dbReference type="SMART" id="SM00248">
    <property type="entry name" value="ANK"/>
    <property type="match status" value="7"/>
</dbReference>
<dbReference type="SUPFAM" id="SSF48403">
    <property type="entry name" value="Ankyrin repeat"/>
    <property type="match status" value="1"/>
</dbReference>
<dbReference type="PROSITE" id="PS50297">
    <property type="entry name" value="ANK_REP_REGION"/>
    <property type="match status" value="1"/>
</dbReference>
<dbReference type="PROSITE" id="PS50088">
    <property type="entry name" value="ANK_REPEAT"/>
    <property type="match status" value="5"/>
</dbReference>